<accession>Q7WKD5</accession>
<evidence type="ECO:0000255" key="1">
    <source>
        <dbReference type="HAMAP-Rule" id="MF_02002"/>
    </source>
</evidence>
<organism>
    <name type="scientific">Bordetella bronchiseptica (strain ATCC BAA-588 / NCTC 13252 / RB50)</name>
    <name type="common">Alcaligenes bronchisepticus</name>
    <dbReference type="NCBI Taxonomy" id="257310"/>
    <lineage>
        <taxon>Bacteria</taxon>
        <taxon>Pseudomonadati</taxon>
        <taxon>Pseudomonadota</taxon>
        <taxon>Betaproteobacteria</taxon>
        <taxon>Burkholderiales</taxon>
        <taxon>Alcaligenaceae</taxon>
        <taxon>Bordetella</taxon>
    </lineage>
</organism>
<dbReference type="EC" id="6.1.1.5" evidence="1"/>
<dbReference type="EMBL" id="BX640443">
    <property type="protein sequence ID" value="CAE32668.1"/>
    <property type="molecule type" value="Genomic_DNA"/>
</dbReference>
<dbReference type="RefSeq" id="WP_003812558.1">
    <property type="nucleotide sequence ID" value="NC_002927.3"/>
</dbReference>
<dbReference type="SMR" id="Q7WKD5"/>
<dbReference type="GeneID" id="56478346"/>
<dbReference type="KEGG" id="bbr:BB2172"/>
<dbReference type="eggNOG" id="COG0060">
    <property type="taxonomic scope" value="Bacteria"/>
</dbReference>
<dbReference type="HOGENOM" id="CLU_001493_7_1_4"/>
<dbReference type="Proteomes" id="UP000001027">
    <property type="component" value="Chromosome"/>
</dbReference>
<dbReference type="GO" id="GO:0005829">
    <property type="term" value="C:cytosol"/>
    <property type="evidence" value="ECO:0007669"/>
    <property type="project" value="TreeGrafter"/>
</dbReference>
<dbReference type="GO" id="GO:0002161">
    <property type="term" value="F:aminoacyl-tRNA deacylase activity"/>
    <property type="evidence" value="ECO:0007669"/>
    <property type="project" value="InterPro"/>
</dbReference>
<dbReference type="GO" id="GO:0005524">
    <property type="term" value="F:ATP binding"/>
    <property type="evidence" value="ECO:0007669"/>
    <property type="project" value="UniProtKB-UniRule"/>
</dbReference>
<dbReference type="GO" id="GO:0004822">
    <property type="term" value="F:isoleucine-tRNA ligase activity"/>
    <property type="evidence" value="ECO:0007669"/>
    <property type="project" value="UniProtKB-UniRule"/>
</dbReference>
<dbReference type="GO" id="GO:0000049">
    <property type="term" value="F:tRNA binding"/>
    <property type="evidence" value="ECO:0007669"/>
    <property type="project" value="InterPro"/>
</dbReference>
<dbReference type="GO" id="GO:0008270">
    <property type="term" value="F:zinc ion binding"/>
    <property type="evidence" value="ECO:0007669"/>
    <property type="project" value="UniProtKB-UniRule"/>
</dbReference>
<dbReference type="GO" id="GO:0006428">
    <property type="term" value="P:isoleucyl-tRNA aminoacylation"/>
    <property type="evidence" value="ECO:0007669"/>
    <property type="project" value="UniProtKB-UniRule"/>
</dbReference>
<dbReference type="CDD" id="cd07960">
    <property type="entry name" value="Anticodon_Ia_Ile_BEm"/>
    <property type="match status" value="1"/>
</dbReference>
<dbReference type="CDD" id="cd00818">
    <property type="entry name" value="IleRS_core"/>
    <property type="match status" value="1"/>
</dbReference>
<dbReference type="FunFam" id="3.40.50.620:FF:000042">
    <property type="entry name" value="Isoleucine--tRNA ligase"/>
    <property type="match status" value="1"/>
</dbReference>
<dbReference type="FunFam" id="3.40.50.620:FF:000048">
    <property type="entry name" value="Isoleucine--tRNA ligase"/>
    <property type="match status" value="1"/>
</dbReference>
<dbReference type="Gene3D" id="1.10.730.20">
    <property type="match status" value="1"/>
</dbReference>
<dbReference type="Gene3D" id="3.40.50.620">
    <property type="entry name" value="HUPs"/>
    <property type="match status" value="2"/>
</dbReference>
<dbReference type="Gene3D" id="3.90.740.10">
    <property type="entry name" value="Valyl/Leucyl/Isoleucyl-tRNA synthetase, editing domain"/>
    <property type="match status" value="1"/>
</dbReference>
<dbReference type="HAMAP" id="MF_02002">
    <property type="entry name" value="Ile_tRNA_synth_type1"/>
    <property type="match status" value="1"/>
</dbReference>
<dbReference type="InterPro" id="IPR001412">
    <property type="entry name" value="aa-tRNA-synth_I_CS"/>
</dbReference>
<dbReference type="InterPro" id="IPR002300">
    <property type="entry name" value="aa-tRNA-synth_Ia"/>
</dbReference>
<dbReference type="InterPro" id="IPR033708">
    <property type="entry name" value="Anticodon_Ile_BEm"/>
</dbReference>
<dbReference type="InterPro" id="IPR002301">
    <property type="entry name" value="Ile-tRNA-ligase"/>
</dbReference>
<dbReference type="InterPro" id="IPR023585">
    <property type="entry name" value="Ile-tRNA-ligase_type1"/>
</dbReference>
<dbReference type="InterPro" id="IPR050081">
    <property type="entry name" value="Ile-tRNA_ligase"/>
</dbReference>
<dbReference type="InterPro" id="IPR013155">
    <property type="entry name" value="M/V/L/I-tRNA-synth_anticd-bd"/>
</dbReference>
<dbReference type="InterPro" id="IPR014729">
    <property type="entry name" value="Rossmann-like_a/b/a_fold"/>
</dbReference>
<dbReference type="InterPro" id="IPR009080">
    <property type="entry name" value="tRNAsynth_Ia_anticodon-bd"/>
</dbReference>
<dbReference type="InterPro" id="IPR009008">
    <property type="entry name" value="Val/Leu/Ile-tRNA-synth_edit"/>
</dbReference>
<dbReference type="InterPro" id="IPR010663">
    <property type="entry name" value="Znf_FPG/IleRS"/>
</dbReference>
<dbReference type="NCBIfam" id="TIGR00392">
    <property type="entry name" value="ileS"/>
    <property type="match status" value="1"/>
</dbReference>
<dbReference type="PANTHER" id="PTHR42765:SF1">
    <property type="entry name" value="ISOLEUCINE--TRNA LIGASE, MITOCHONDRIAL"/>
    <property type="match status" value="1"/>
</dbReference>
<dbReference type="PANTHER" id="PTHR42765">
    <property type="entry name" value="SOLEUCYL-TRNA SYNTHETASE"/>
    <property type="match status" value="1"/>
</dbReference>
<dbReference type="Pfam" id="PF08264">
    <property type="entry name" value="Anticodon_1"/>
    <property type="match status" value="1"/>
</dbReference>
<dbReference type="Pfam" id="PF00133">
    <property type="entry name" value="tRNA-synt_1"/>
    <property type="match status" value="1"/>
</dbReference>
<dbReference type="Pfam" id="PF06827">
    <property type="entry name" value="zf-FPG_IleRS"/>
    <property type="match status" value="1"/>
</dbReference>
<dbReference type="PRINTS" id="PR00984">
    <property type="entry name" value="TRNASYNTHILE"/>
</dbReference>
<dbReference type="SUPFAM" id="SSF47323">
    <property type="entry name" value="Anticodon-binding domain of a subclass of class I aminoacyl-tRNA synthetases"/>
    <property type="match status" value="1"/>
</dbReference>
<dbReference type="SUPFAM" id="SSF52374">
    <property type="entry name" value="Nucleotidylyl transferase"/>
    <property type="match status" value="1"/>
</dbReference>
<dbReference type="SUPFAM" id="SSF50677">
    <property type="entry name" value="ValRS/IleRS/LeuRS editing domain"/>
    <property type="match status" value="1"/>
</dbReference>
<dbReference type="PROSITE" id="PS00178">
    <property type="entry name" value="AA_TRNA_LIGASE_I"/>
    <property type="match status" value="1"/>
</dbReference>
<gene>
    <name evidence="1" type="primary">ileS</name>
    <name type="ordered locus">BB2172</name>
</gene>
<reference key="1">
    <citation type="journal article" date="2003" name="Nat. Genet.">
        <title>Comparative analysis of the genome sequences of Bordetella pertussis, Bordetella parapertussis and Bordetella bronchiseptica.</title>
        <authorList>
            <person name="Parkhill J."/>
            <person name="Sebaihia M."/>
            <person name="Preston A."/>
            <person name="Murphy L.D."/>
            <person name="Thomson N.R."/>
            <person name="Harris D.E."/>
            <person name="Holden M.T.G."/>
            <person name="Churcher C.M."/>
            <person name="Bentley S.D."/>
            <person name="Mungall K.L."/>
            <person name="Cerdeno-Tarraga A.-M."/>
            <person name="Temple L."/>
            <person name="James K.D."/>
            <person name="Harris B."/>
            <person name="Quail M.A."/>
            <person name="Achtman M."/>
            <person name="Atkin R."/>
            <person name="Baker S."/>
            <person name="Basham D."/>
            <person name="Bason N."/>
            <person name="Cherevach I."/>
            <person name="Chillingworth T."/>
            <person name="Collins M."/>
            <person name="Cronin A."/>
            <person name="Davis P."/>
            <person name="Doggett J."/>
            <person name="Feltwell T."/>
            <person name="Goble A."/>
            <person name="Hamlin N."/>
            <person name="Hauser H."/>
            <person name="Holroyd S."/>
            <person name="Jagels K."/>
            <person name="Leather S."/>
            <person name="Moule S."/>
            <person name="Norberczak H."/>
            <person name="O'Neil S."/>
            <person name="Ormond D."/>
            <person name="Price C."/>
            <person name="Rabbinowitsch E."/>
            <person name="Rutter S."/>
            <person name="Sanders M."/>
            <person name="Saunders D."/>
            <person name="Seeger K."/>
            <person name="Sharp S."/>
            <person name="Simmonds M."/>
            <person name="Skelton J."/>
            <person name="Squares R."/>
            <person name="Squares S."/>
            <person name="Stevens K."/>
            <person name="Unwin L."/>
            <person name="Whitehead S."/>
            <person name="Barrell B.G."/>
            <person name="Maskell D.J."/>
        </authorList>
    </citation>
    <scope>NUCLEOTIDE SEQUENCE [LARGE SCALE GENOMIC DNA]</scope>
    <source>
        <strain>ATCC BAA-588 / NCTC 13252 / RB50</strain>
    </source>
</reference>
<proteinExistence type="inferred from homology"/>
<keyword id="KW-0030">Aminoacyl-tRNA synthetase</keyword>
<keyword id="KW-0067">ATP-binding</keyword>
<keyword id="KW-0963">Cytoplasm</keyword>
<keyword id="KW-0436">Ligase</keyword>
<keyword id="KW-0479">Metal-binding</keyword>
<keyword id="KW-0547">Nucleotide-binding</keyword>
<keyword id="KW-0648">Protein biosynthesis</keyword>
<keyword id="KW-0862">Zinc</keyword>
<comment type="function">
    <text evidence="1">Catalyzes the attachment of isoleucine to tRNA(Ile). As IleRS can inadvertently accommodate and process structurally similar amino acids such as valine, to avoid such errors it has two additional distinct tRNA(Ile)-dependent editing activities. One activity is designated as 'pretransfer' editing and involves the hydrolysis of activated Val-AMP. The other activity is designated 'posttransfer' editing and involves deacylation of mischarged Val-tRNA(Ile).</text>
</comment>
<comment type="catalytic activity">
    <reaction evidence="1">
        <text>tRNA(Ile) + L-isoleucine + ATP = L-isoleucyl-tRNA(Ile) + AMP + diphosphate</text>
        <dbReference type="Rhea" id="RHEA:11060"/>
        <dbReference type="Rhea" id="RHEA-COMP:9666"/>
        <dbReference type="Rhea" id="RHEA-COMP:9695"/>
        <dbReference type="ChEBI" id="CHEBI:30616"/>
        <dbReference type="ChEBI" id="CHEBI:33019"/>
        <dbReference type="ChEBI" id="CHEBI:58045"/>
        <dbReference type="ChEBI" id="CHEBI:78442"/>
        <dbReference type="ChEBI" id="CHEBI:78528"/>
        <dbReference type="ChEBI" id="CHEBI:456215"/>
        <dbReference type="EC" id="6.1.1.5"/>
    </reaction>
</comment>
<comment type="cofactor">
    <cofactor evidence="1">
        <name>Zn(2+)</name>
        <dbReference type="ChEBI" id="CHEBI:29105"/>
    </cofactor>
    <text evidence="1">Binds 1 zinc ion per subunit.</text>
</comment>
<comment type="subunit">
    <text evidence="1">Monomer.</text>
</comment>
<comment type="subcellular location">
    <subcellularLocation>
        <location evidence="1">Cytoplasm</location>
    </subcellularLocation>
</comment>
<comment type="domain">
    <text evidence="1">IleRS has two distinct active sites: one for aminoacylation and one for editing. The misactivated valine is translocated from the active site to the editing site, which sterically excludes the correctly activated isoleucine. The single editing site contains two valyl binding pockets, one specific for each substrate (Val-AMP or Val-tRNA(Ile)).</text>
</comment>
<comment type="similarity">
    <text evidence="1">Belongs to the class-I aminoacyl-tRNA synthetase family. IleS type 1 subfamily.</text>
</comment>
<feature type="chain" id="PRO_0000098357" description="Isoleucine--tRNA ligase">
    <location>
        <begin position="1"/>
        <end position="953"/>
    </location>
</feature>
<feature type="short sequence motif" description="'HIGH' region">
    <location>
        <begin position="57"/>
        <end position="67"/>
    </location>
</feature>
<feature type="short sequence motif" description="'KMSKS' region">
    <location>
        <begin position="623"/>
        <end position="627"/>
    </location>
</feature>
<feature type="binding site" evidence="1">
    <location>
        <position position="582"/>
    </location>
    <ligand>
        <name>L-isoleucyl-5'-AMP</name>
        <dbReference type="ChEBI" id="CHEBI:178002"/>
    </ligand>
</feature>
<feature type="binding site" evidence="1">
    <location>
        <position position="626"/>
    </location>
    <ligand>
        <name>ATP</name>
        <dbReference type="ChEBI" id="CHEBI:30616"/>
    </ligand>
</feature>
<feature type="binding site" evidence="1">
    <location>
        <position position="916"/>
    </location>
    <ligand>
        <name>Zn(2+)</name>
        <dbReference type="ChEBI" id="CHEBI:29105"/>
    </ligand>
</feature>
<feature type="binding site" evidence="1">
    <location>
        <position position="919"/>
    </location>
    <ligand>
        <name>Zn(2+)</name>
        <dbReference type="ChEBI" id="CHEBI:29105"/>
    </ligand>
</feature>
<feature type="binding site" evidence="1">
    <location>
        <position position="936"/>
    </location>
    <ligand>
        <name>Zn(2+)</name>
        <dbReference type="ChEBI" id="CHEBI:29105"/>
    </ligand>
</feature>
<feature type="binding site" evidence="1">
    <location>
        <position position="939"/>
    </location>
    <ligand>
        <name>Zn(2+)</name>
        <dbReference type="ChEBI" id="CHEBI:29105"/>
    </ligand>
</feature>
<protein>
    <recommendedName>
        <fullName evidence="1">Isoleucine--tRNA ligase</fullName>
        <ecNumber evidence="1">6.1.1.5</ecNumber>
    </recommendedName>
    <alternativeName>
        <fullName evidence="1">Isoleucyl-tRNA synthetase</fullName>
        <shortName evidence="1">IleRS</shortName>
    </alternativeName>
</protein>
<name>SYI_BORBR</name>
<sequence length="953" mass="105531">MDYKKSLNLPDTPFPMRGDLAKREPGWVAEWEETQVYQAIRAASRGRPRFVLHDGPPYANGDIHIGHAVNKILKDIIVKSRNMAGYDAHYVPGWDCHGMPIEIQIEKKYGKHLPVTEVQSKARAYALEQIDRQRKDFKRLGVLGDWHNPYLTMNFSNEADEIRVLGRILEKGYVFRGLKPVNWCFDCGSALAEAEVEYADRVDPAIDVAFPFTDRGALARAFGLDEVDAGAIVIWTTTPWTIPSNQALNVHPEIDYALVRVTPTPVHGPLLLLAQERVEPSLKAWGLEGEIIATAKGEALEGLRFRHPLAAAAQGYDRTSPIYLGDYVTLDTGTGVVHSAPAYGIEDFVSCKAHGLADSDILGPVMGDGKFVDSLPLFGGLSIWDANPRIVEALKLAGSLMLVQKLSHSYMHCWRHKTPVIYRATSQWFAGMDVKPRDGGPSLRESALAGIDATAFYPAWGRARLHAMIANRPDWTLSRQRQWGVPMAFFVHKETGELHPRTVELLEQVAQRVEKGGIEAWQSLDPRELLGDEAELYEKNRDTLDVWFDSGSTHATVLGGKDGVLGGSHGAELAWPADLYLEGSDQHRGWFHSSLLTGCMLYGHPPYKGLLTHGFVVDGQGRKMSKSVGNVIAPQKVSDSLGAEILRLWVASTDYSGELSISDEILKRVVESYRRIRNTLRFLLANVADFDAVGQAVPYGELFEIDRYALAMTAQMQAEVQGHYERYDFHPAVSRLQTFCSEDLGAFYLDILKDRLYTTAAGSAARRSAQTALLDITQTLLKLMAPILSFTAEEAWKVLAGSALAKQADAPRVTIFTEVYHALPPFADGEALTAKWTRLRAIRAEVQRKLEEVRSAGAIGSSLQAEVDLYANAADHDILASLGDDLRFVLIVSRATVHADADDLRIEIAASGHKKCERCWHWRPDVGQDADHPEICGRCVSNLFGAGEPRTRA</sequence>